<dbReference type="EMBL" id="CP000781">
    <property type="protein sequence ID" value="ABS67177.1"/>
    <property type="molecule type" value="Genomic_DNA"/>
</dbReference>
<dbReference type="SMR" id="A7IGN4"/>
<dbReference type="STRING" id="78245.Xaut_1932"/>
<dbReference type="KEGG" id="xau:Xaut_1932"/>
<dbReference type="eggNOG" id="COG0292">
    <property type="taxonomic scope" value="Bacteria"/>
</dbReference>
<dbReference type="HOGENOM" id="CLU_123265_0_1_5"/>
<dbReference type="OrthoDB" id="9808966at2"/>
<dbReference type="PhylomeDB" id="A7IGN4"/>
<dbReference type="Proteomes" id="UP000002417">
    <property type="component" value="Chromosome"/>
</dbReference>
<dbReference type="GO" id="GO:1990904">
    <property type="term" value="C:ribonucleoprotein complex"/>
    <property type="evidence" value="ECO:0007669"/>
    <property type="project" value="UniProtKB-KW"/>
</dbReference>
<dbReference type="GO" id="GO:0005840">
    <property type="term" value="C:ribosome"/>
    <property type="evidence" value="ECO:0007669"/>
    <property type="project" value="UniProtKB-KW"/>
</dbReference>
<dbReference type="GO" id="GO:0019843">
    <property type="term" value="F:rRNA binding"/>
    <property type="evidence" value="ECO:0007669"/>
    <property type="project" value="UniProtKB-UniRule"/>
</dbReference>
<dbReference type="GO" id="GO:0003735">
    <property type="term" value="F:structural constituent of ribosome"/>
    <property type="evidence" value="ECO:0007669"/>
    <property type="project" value="InterPro"/>
</dbReference>
<dbReference type="GO" id="GO:0000027">
    <property type="term" value="P:ribosomal large subunit assembly"/>
    <property type="evidence" value="ECO:0007669"/>
    <property type="project" value="UniProtKB-UniRule"/>
</dbReference>
<dbReference type="GO" id="GO:0006412">
    <property type="term" value="P:translation"/>
    <property type="evidence" value="ECO:0007669"/>
    <property type="project" value="InterPro"/>
</dbReference>
<dbReference type="CDD" id="cd07026">
    <property type="entry name" value="Ribosomal_L20"/>
    <property type="match status" value="1"/>
</dbReference>
<dbReference type="FunFam" id="1.10.1900.20:FF:000001">
    <property type="entry name" value="50S ribosomal protein L20"/>
    <property type="match status" value="1"/>
</dbReference>
<dbReference type="Gene3D" id="6.10.160.10">
    <property type="match status" value="1"/>
</dbReference>
<dbReference type="Gene3D" id="1.10.1900.20">
    <property type="entry name" value="Ribosomal protein L20"/>
    <property type="match status" value="1"/>
</dbReference>
<dbReference type="HAMAP" id="MF_00382">
    <property type="entry name" value="Ribosomal_bL20"/>
    <property type="match status" value="1"/>
</dbReference>
<dbReference type="InterPro" id="IPR005813">
    <property type="entry name" value="Ribosomal_bL20"/>
</dbReference>
<dbReference type="InterPro" id="IPR049946">
    <property type="entry name" value="RIBOSOMAL_L20_CS"/>
</dbReference>
<dbReference type="InterPro" id="IPR035566">
    <property type="entry name" value="Ribosomal_protein_bL20_C"/>
</dbReference>
<dbReference type="NCBIfam" id="TIGR01032">
    <property type="entry name" value="rplT_bact"/>
    <property type="match status" value="1"/>
</dbReference>
<dbReference type="PANTHER" id="PTHR10986">
    <property type="entry name" value="39S RIBOSOMAL PROTEIN L20"/>
    <property type="match status" value="1"/>
</dbReference>
<dbReference type="Pfam" id="PF00453">
    <property type="entry name" value="Ribosomal_L20"/>
    <property type="match status" value="1"/>
</dbReference>
<dbReference type="PRINTS" id="PR00062">
    <property type="entry name" value="RIBOSOMALL20"/>
</dbReference>
<dbReference type="SUPFAM" id="SSF74731">
    <property type="entry name" value="Ribosomal protein L20"/>
    <property type="match status" value="1"/>
</dbReference>
<dbReference type="PROSITE" id="PS00937">
    <property type="entry name" value="RIBOSOMAL_L20"/>
    <property type="match status" value="1"/>
</dbReference>
<reference key="1">
    <citation type="submission" date="2007-07" db="EMBL/GenBank/DDBJ databases">
        <title>Complete sequence of chromosome of Xanthobacter autotrophicus Py2.</title>
        <authorList>
            <consortium name="US DOE Joint Genome Institute"/>
            <person name="Copeland A."/>
            <person name="Lucas S."/>
            <person name="Lapidus A."/>
            <person name="Barry K."/>
            <person name="Glavina del Rio T."/>
            <person name="Hammon N."/>
            <person name="Israni S."/>
            <person name="Dalin E."/>
            <person name="Tice H."/>
            <person name="Pitluck S."/>
            <person name="Sims D."/>
            <person name="Brettin T."/>
            <person name="Bruce D."/>
            <person name="Detter J.C."/>
            <person name="Han C."/>
            <person name="Tapia R."/>
            <person name="Brainard J."/>
            <person name="Schmutz J."/>
            <person name="Larimer F."/>
            <person name="Land M."/>
            <person name="Hauser L."/>
            <person name="Kyrpides N."/>
            <person name="Kim E."/>
            <person name="Ensigns S.A."/>
            <person name="Richardson P."/>
        </authorList>
    </citation>
    <scope>NUCLEOTIDE SEQUENCE [LARGE SCALE GENOMIC DNA]</scope>
    <source>
        <strain>ATCC BAA-1158 / Py2</strain>
    </source>
</reference>
<name>RL20_XANP2</name>
<proteinExistence type="inferred from homology"/>
<feature type="chain" id="PRO_1000122394" description="Large ribosomal subunit protein bL20">
    <location>
        <begin position="1"/>
        <end position="120"/>
    </location>
</feature>
<evidence type="ECO:0000255" key="1">
    <source>
        <dbReference type="HAMAP-Rule" id="MF_00382"/>
    </source>
</evidence>
<evidence type="ECO:0000305" key="2"/>
<sequence length="120" mass="13601">MARVKRGVTSHAKHKKVFEAAKGFYGRRKNTIRAAKSAVERSMQYAYRDRKVKKRNFRALWIQRINAGVRALDLDLTYSRFIDGLGKAGIEVDRKVLSDIAIHEPDAFKALVEKAKAALA</sequence>
<organism>
    <name type="scientific">Xanthobacter autotrophicus (strain ATCC BAA-1158 / Py2)</name>
    <dbReference type="NCBI Taxonomy" id="78245"/>
    <lineage>
        <taxon>Bacteria</taxon>
        <taxon>Pseudomonadati</taxon>
        <taxon>Pseudomonadota</taxon>
        <taxon>Alphaproteobacteria</taxon>
        <taxon>Hyphomicrobiales</taxon>
        <taxon>Xanthobacteraceae</taxon>
        <taxon>Xanthobacter</taxon>
    </lineage>
</organism>
<protein>
    <recommendedName>
        <fullName evidence="1">Large ribosomal subunit protein bL20</fullName>
    </recommendedName>
    <alternativeName>
        <fullName evidence="2">50S ribosomal protein L20</fullName>
    </alternativeName>
</protein>
<keyword id="KW-1185">Reference proteome</keyword>
<keyword id="KW-0687">Ribonucleoprotein</keyword>
<keyword id="KW-0689">Ribosomal protein</keyword>
<keyword id="KW-0694">RNA-binding</keyword>
<keyword id="KW-0699">rRNA-binding</keyword>
<accession>A7IGN4</accession>
<gene>
    <name evidence="1" type="primary">rplT</name>
    <name type="ordered locus">Xaut_1932</name>
</gene>
<comment type="function">
    <text evidence="1">Binds directly to 23S ribosomal RNA and is necessary for the in vitro assembly process of the 50S ribosomal subunit. It is not involved in the protein synthesizing functions of that subunit.</text>
</comment>
<comment type="similarity">
    <text evidence="1">Belongs to the bacterial ribosomal protein bL20 family.</text>
</comment>